<name>PGMC_SOLTU</name>
<accession>Q9M4G4</accession>
<reference key="1">
    <citation type="thesis" date="1999" institute="Freie Universitaet Berlin" country="Germany">
        <authorList>
            <person name="Tauberger E."/>
        </authorList>
    </citation>
    <scope>NUCLEOTIDE SEQUENCE [MRNA]</scope>
    <source>
        <tissue>Tuber</tissue>
    </source>
</reference>
<organism>
    <name type="scientific">Solanum tuberosum</name>
    <name type="common">Potato</name>
    <dbReference type="NCBI Taxonomy" id="4113"/>
    <lineage>
        <taxon>Eukaryota</taxon>
        <taxon>Viridiplantae</taxon>
        <taxon>Streptophyta</taxon>
        <taxon>Embryophyta</taxon>
        <taxon>Tracheophyta</taxon>
        <taxon>Spermatophyta</taxon>
        <taxon>Magnoliopsida</taxon>
        <taxon>eudicotyledons</taxon>
        <taxon>Gunneridae</taxon>
        <taxon>Pentapetalae</taxon>
        <taxon>asterids</taxon>
        <taxon>lamiids</taxon>
        <taxon>Solanales</taxon>
        <taxon>Solanaceae</taxon>
        <taxon>Solanoideae</taxon>
        <taxon>Solaneae</taxon>
        <taxon>Solanum</taxon>
    </lineage>
</organism>
<protein>
    <recommendedName>
        <fullName>Phosphoglucomutase, cytoplasmic</fullName>
        <shortName>PGM</shortName>
        <ecNumber evidence="3">5.4.2.2</ecNumber>
    </recommendedName>
    <alternativeName>
        <fullName>Glucose phosphomutase</fullName>
    </alternativeName>
</protein>
<gene>
    <name type="primary">PGM1</name>
    <name type="synonym">PGM I</name>
</gene>
<keyword id="KW-0119">Carbohydrate metabolism</keyword>
<keyword id="KW-0963">Cytoplasm</keyword>
<keyword id="KW-0313">Glucose metabolism</keyword>
<keyword id="KW-0413">Isomerase</keyword>
<keyword id="KW-0460">Magnesium</keyword>
<keyword id="KW-0479">Metal-binding</keyword>
<keyword id="KW-0597">Phosphoprotein</keyword>
<keyword id="KW-1185">Reference proteome</keyword>
<sequence length="583" mass="63470">MANFKVSRVETTPFEGQKPGTSGLRKKVKVFIQPHYLQNFVQATFNALGADRVEGATLVVSGDGRYYSKDAIQIITKMAAANGVRRVWIGQNGLLSTPAVSAVVRERVGADGSKATGAFILTASHNPGGPHEDFGIKYNMENGGPAPEGITNKIYENTTTIKEYLIAEGLPDVDISTTGVSSFEGPKGKFDVDVFDSTSDYLKLLKSIFDFPAIQKLLSSPKFSFCYDALHGVAGVHAKRIFVEELGANESSLVNCVPKEDFGGGHPDPNLTYAKELVARMGLSKTHSEPNPPEFGAAADGDGDRNMVLGKRFFVTPSDSVAIIAANAVQAIPYFSGGLKGVARSMPTSAALDIVAKHLNLKFFEVPTGWKFFGNLMDAGMCSICGEESFGTGSDHIREKDGIWAVLAWLSILAYKNKDNLGEGNLVSVEDIVRQHWAIYGRHYYTRYDYENVNADGAKDLMAHLVKLQSSIDEVNKLIKGIRSDVSNVVHADEFEYKDPVDGSVSKHQGIRYLFEDGSRLVFRLSGTGSEGATIRLYIEQYEKDSSKIGRDSQEALAPLVEVALKLSKMQEYTSRSAPTVIT</sequence>
<comment type="function">
    <text evidence="2 3">Catalyzes the reversible isomerization of alpha-D-glucose 1-phosphate to alpha-D-glucose 6-phosphate (By similarity). The mechanism proceeds via the intermediate compound alpha-D-glucose 1,6-bisphosphate (By similarity). This enzyme participates in both the breakdown and synthesis of glucose (By similarity).</text>
</comment>
<comment type="catalytic activity">
    <reaction evidence="3">
        <text>alpha-D-glucose 1-phosphate = alpha-D-glucose 6-phosphate</text>
        <dbReference type="Rhea" id="RHEA:23536"/>
        <dbReference type="ChEBI" id="CHEBI:58225"/>
        <dbReference type="ChEBI" id="CHEBI:58601"/>
        <dbReference type="EC" id="5.4.2.2"/>
    </reaction>
</comment>
<comment type="catalytic activity">
    <reaction evidence="3">
        <text>O-phospho-L-seryl-[protein] + alpha-D-glucose 1-phosphate = alpha-D-glucose 1,6-bisphosphate + L-seryl-[protein]</text>
        <dbReference type="Rhea" id="RHEA:68748"/>
        <dbReference type="Rhea" id="RHEA-COMP:9863"/>
        <dbReference type="Rhea" id="RHEA-COMP:11604"/>
        <dbReference type="ChEBI" id="CHEBI:29999"/>
        <dbReference type="ChEBI" id="CHEBI:58392"/>
        <dbReference type="ChEBI" id="CHEBI:58601"/>
        <dbReference type="ChEBI" id="CHEBI:83421"/>
    </reaction>
</comment>
<comment type="catalytic activity">
    <reaction evidence="3">
        <text>alpha-D-glucose 1,6-bisphosphate + L-seryl-[protein] = O-phospho-L-seryl-[protein] + alpha-D-glucose 6-phosphate</text>
        <dbReference type="Rhea" id="RHEA:68752"/>
        <dbReference type="Rhea" id="RHEA-COMP:9863"/>
        <dbReference type="Rhea" id="RHEA-COMP:11604"/>
        <dbReference type="ChEBI" id="CHEBI:29999"/>
        <dbReference type="ChEBI" id="CHEBI:58225"/>
        <dbReference type="ChEBI" id="CHEBI:58392"/>
        <dbReference type="ChEBI" id="CHEBI:83421"/>
    </reaction>
</comment>
<comment type="cofactor">
    <cofactor evidence="1">
        <name>Mg(2+)</name>
        <dbReference type="ChEBI" id="CHEBI:18420"/>
    </cofactor>
    <text evidence="1">Binds 1 Mg(2+) ion per subunit.</text>
</comment>
<comment type="subunit">
    <text evidence="1">Monomer.</text>
</comment>
<comment type="subcellular location">
    <subcellularLocation>
        <location evidence="3">Cytoplasm</location>
    </subcellularLocation>
</comment>
<comment type="similarity">
    <text evidence="5">Belongs to the phosphohexose mutase family.</text>
</comment>
<dbReference type="EC" id="5.4.2.2" evidence="3"/>
<dbReference type="EMBL" id="AJ240054">
    <property type="protein sequence ID" value="CAB93681.1"/>
    <property type="molecule type" value="mRNA"/>
</dbReference>
<dbReference type="RefSeq" id="NP_001275333.1">
    <property type="nucleotide sequence ID" value="NM_001288404.1"/>
</dbReference>
<dbReference type="SMR" id="Q9M4G4"/>
<dbReference type="FunCoup" id="Q9M4G4">
    <property type="interactions" value="2349"/>
</dbReference>
<dbReference type="STRING" id="4113.Q9M4G4"/>
<dbReference type="GeneID" id="102579912"/>
<dbReference type="KEGG" id="sot:102579912"/>
<dbReference type="InParanoid" id="Q9M4G4"/>
<dbReference type="OrthoDB" id="2291at2759"/>
<dbReference type="Proteomes" id="UP000011115">
    <property type="component" value="Unassembled WGS sequence"/>
</dbReference>
<dbReference type="GO" id="GO:0005829">
    <property type="term" value="C:cytosol"/>
    <property type="evidence" value="ECO:0000318"/>
    <property type="project" value="GO_Central"/>
</dbReference>
<dbReference type="GO" id="GO:0000287">
    <property type="term" value="F:magnesium ion binding"/>
    <property type="evidence" value="ECO:0007669"/>
    <property type="project" value="InterPro"/>
</dbReference>
<dbReference type="GO" id="GO:0004614">
    <property type="term" value="F:phosphoglucomutase activity"/>
    <property type="evidence" value="ECO:0000318"/>
    <property type="project" value="GO_Central"/>
</dbReference>
<dbReference type="GO" id="GO:0005975">
    <property type="term" value="P:carbohydrate metabolic process"/>
    <property type="evidence" value="ECO:0000318"/>
    <property type="project" value="GO_Central"/>
</dbReference>
<dbReference type="GO" id="GO:0006006">
    <property type="term" value="P:glucose metabolic process"/>
    <property type="evidence" value="ECO:0007669"/>
    <property type="project" value="UniProtKB-KW"/>
</dbReference>
<dbReference type="CDD" id="cd03085">
    <property type="entry name" value="PGM1"/>
    <property type="match status" value="1"/>
</dbReference>
<dbReference type="FunFam" id="3.30.310.50:FF:000002">
    <property type="entry name" value="Phosphoglucomutase 5"/>
    <property type="match status" value="1"/>
</dbReference>
<dbReference type="FunFam" id="3.40.120.10:FF:000004">
    <property type="entry name" value="Phosphoglucomutase 5"/>
    <property type="match status" value="1"/>
</dbReference>
<dbReference type="FunFam" id="3.40.120.10:FF:000005">
    <property type="entry name" value="Phosphoglucomutase 5"/>
    <property type="match status" value="1"/>
</dbReference>
<dbReference type="FunFam" id="3.40.120.10:FF:000009">
    <property type="entry name" value="Phosphoglucomutase, cytoplasmic 1"/>
    <property type="match status" value="1"/>
</dbReference>
<dbReference type="Gene3D" id="3.40.120.10">
    <property type="entry name" value="Alpha-D-Glucose-1,6-Bisphosphate, subunit A, domain 3"/>
    <property type="match status" value="3"/>
</dbReference>
<dbReference type="Gene3D" id="3.30.310.50">
    <property type="entry name" value="Alpha-D-phosphohexomutase, C-terminal domain"/>
    <property type="match status" value="1"/>
</dbReference>
<dbReference type="InterPro" id="IPR005844">
    <property type="entry name" value="A-D-PHexomutase_a/b/a-I"/>
</dbReference>
<dbReference type="InterPro" id="IPR016055">
    <property type="entry name" value="A-D-PHexomutase_a/b/a-I/II/III"/>
</dbReference>
<dbReference type="InterPro" id="IPR005845">
    <property type="entry name" value="A-D-PHexomutase_a/b/a-II"/>
</dbReference>
<dbReference type="InterPro" id="IPR005846">
    <property type="entry name" value="A-D-PHexomutase_a/b/a-III"/>
</dbReference>
<dbReference type="InterPro" id="IPR036900">
    <property type="entry name" value="A-D-PHexomutase_C_sf"/>
</dbReference>
<dbReference type="InterPro" id="IPR016066">
    <property type="entry name" value="A-D-PHexomutase_CS"/>
</dbReference>
<dbReference type="InterPro" id="IPR005841">
    <property type="entry name" value="Alpha-D-phosphohexomutase_SF"/>
</dbReference>
<dbReference type="InterPro" id="IPR045244">
    <property type="entry name" value="PGM"/>
</dbReference>
<dbReference type="NCBIfam" id="NF005737">
    <property type="entry name" value="PRK07564.1-1"/>
    <property type="match status" value="1"/>
</dbReference>
<dbReference type="PANTHER" id="PTHR22573:SF2">
    <property type="entry name" value="PHOSPHOGLUCOMUTASE"/>
    <property type="match status" value="1"/>
</dbReference>
<dbReference type="PANTHER" id="PTHR22573">
    <property type="entry name" value="PHOSPHOHEXOMUTASE FAMILY MEMBER"/>
    <property type="match status" value="1"/>
</dbReference>
<dbReference type="Pfam" id="PF24947">
    <property type="entry name" value="PGM1_C_vert_fung"/>
    <property type="match status" value="1"/>
</dbReference>
<dbReference type="Pfam" id="PF02878">
    <property type="entry name" value="PGM_PMM_I"/>
    <property type="match status" value="1"/>
</dbReference>
<dbReference type="Pfam" id="PF02879">
    <property type="entry name" value="PGM_PMM_II"/>
    <property type="match status" value="1"/>
</dbReference>
<dbReference type="Pfam" id="PF02880">
    <property type="entry name" value="PGM_PMM_III"/>
    <property type="match status" value="1"/>
</dbReference>
<dbReference type="PRINTS" id="PR00509">
    <property type="entry name" value="PGMPMM"/>
</dbReference>
<dbReference type="SUPFAM" id="SSF55957">
    <property type="entry name" value="Phosphoglucomutase, C-terminal domain"/>
    <property type="match status" value="1"/>
</dbReference>
<dbReference type="SUPFAM" id="SSF53738">
    <property type="entry name" value="Phosphoglucomutase, first 3 domains"/>
    <property type="match status" value="3"/>
</dbReference>
<dbReference type="PROSITE" id="PS00710">
    <property type="entry name" value="PGM_PMM"/>
    <property type="match status" value="1"/>
</dbReference>
<proteinExistence type="evidence at transcript level"/>
<feature type="chain" id="PRO_0000147806" description="Phosphoglucomutase, cytoplasmic">
    <location>
        <begin position="1"/>
        <end position="583"/>
    </location>
</feature>
<feature type="region of interest" description="Disordered" evidence="4">
    <location>
        <begin position="1"/>
        <end position="20"/>
    </location>
</feature>
<feature type="active site" description="Phosphoserine intermediate" evidence="1">
    <location>
        <position position="124"/>
    </location>
</feature>
<feature type="binding site" evidence="1">
    <location>
        <position position="25"/>
    </location>
    <ligand>
        <name>alpha-D-glucose 1,6-bisphosphate</name>
        <dbReference type="ChEBI" id="CHEBI:58392"/>
    </ligand>
</feature>
<feature type="binding site" evidence="1">
    <location>
        <position position="124"/>
    </location>
    <ligand>
        <name>alpha-D-glucose 1,6-bisphosphate</name>
        <dbReference type="ChEBI" id="CHEBI:58392"/>
    </ligand>
</feature>
<feature type="binding site" description="via phosphate group" evidence="1">
    <location>
        <position position="124"/>
    </location>
    <ligand>
        <name>Mg(2+)</name>
        <dbReference type="ChEBI" id="CHEBI:18420"/>
    </ligand>
</feature>
<feature type="binding site" evidence="1">
    <location>
        <position position="300"/>
    </location>
    <ligand>
        <name>Mg(2+)</name>
        <dbReference type="ChEBI" id="CHEBI:18420"/>
    </ligand>
</feature>
<feature type="binding site" evidence="1">
    <location>
        <position position="302"/>
    </location>
    <ligand>
        <name>Mg(2+)</name>
        <dbReference type="ChEBI" id="CHEBI:18420"/>
    </ligand>
</feature>
<feature type="binding site" evidence="1">
    <location>
        <position position="304"/>
    </location>
    <ligand>
        <name>alpha-D-glucose 1,6-bisphosphate</name>
        <dbReference type="ChEBI" id="CHEBI:58392"/>
    </ligand>
</feature>
<feature type="binding site" evidence="1">
    <location>
        <position position="304"/>
    </location>
    <ligand>
        <name>Mg(2+)</name>
        <dbReference type="ChEBI" id="CHEBI:18420"/>
    </ligand>
</feature>
<feature type="binding site" evidence="1">
    <location>
        <position position="305"/>
    </location>
    <ligand>
        <name>alpha-D-glucose 1,6-bisphosphate</name>
        <dbReference type="ChEBI" id="CHEBI:58392"/>
    </ligand>
</feature>
<feature type="binding site" evidence="1">
    <location>
        <position position="368"/>
    </location>
    <ligand>
        <name>alpha-D-glucose 1,6-bisphosphate</name>
        <dbReference type="ChEBI" id="CHEBI:58392"/>
    </ligand>
</feature>
<feature type="binding site" evidence="1">
    <location>
        <position position="387"/>
    </location>
    <ligand>
        <name>alpha-D-glucose 1,6-bisphosphate</name>
        <dbReference type="ChEBI" id="CHEBI:58392"/>
    </ligand>
</feature>
<feature type="binding site" evidence="1">
    <location>
        <position position="389"/>
    </location>
    <ligand>
        <name>alpha-D-glucose 1,6-bisphosphate</name>
        <dbReference type="ChEBI" id="CHEBI:58392"/>
    </ligand>
</feature>
<feature type="binding site" evidence="1">
    <location>
        <position position="400"/>
    </location>
    <ligand>
        <name>alpha-D-glucose 1,6-bisphosphate</name>
        <dbReference type="ChEBI" id="CHEBI:58392"/>
    </ligand>
</feature>
<feature type="modified residue" description="Phosphoserine" evidence="1">
    <location>
        <position position="124"/>
    </location>
</feature>
<evidence type="ECO:0000250" key="1">
    <source>
        <dbReference type="UniProtKB" id="P00949"/>
    </source>
</evidence>
<evidence type="ECO:0000250" key="2">
    <source>
        <dbReference type="UniProtKB" id="P36871"/>
    </source>
</evidence>
<evidence type="ECO:0000250" key="3">
    <source>
        <dbReference type="UniProtKB" id="P93804"/>
    </source>
</evidence>
<evidence type="ECO:0000256" key="4">
    <source>
        <dbReference type="SAM" id="MobiDB-lite"/>
    </source>
</evidence>
<evidence type="ECO:0000305" key="5"/>